<accession>Q48NZ0</accession>
<proteinExistence type="inferred from homology"/>
<name>RL9_PSE14</name>
<evidence type="ECO:0000255" key="1">
    <source>
        <dbReference type="HAMAP-Rule" id="MF_00503"/>
    </source>
</evidence>
<evidence type="ECO:0000305" key="2"/>
<organism>
    <name type="scientific">Pseudomonas savastanoi pv. phaseolicola (strain 1448A / Race 6)</name>
    <name type="common">Pseudomonas syringae pv. phaseolicola (strain 1448A / Race 6)</name>
    <dbReference type="NCBI Taxonomy" id="264730"/>
    <lineage>
        <taxon>Bacteria</taxon>
        <taxon>Pseudomonadati</taxon>
        <taxon>Pseudomonadota</taxon>
        <taxon>Gammaproteobacteria</taxon>
        <taxon>Pseudomonadales</taxon>
        <taxon>Pseudomonadaceae</taxon>
        <taxon>Pseudomonas</taxon>
    </lineage>
</organism>
<keyword id="KW-0687">Ribonucleoprotein</keyword>
<keyword id="KW-0689">Ribosomal protein</keyword>
<keyword id="KW-0694">RNA-binding</keyword>
<keyword id="KW-0699">rRNA-binding</keyword>
<comment type="function">
    <text evidence="1">Binds to the 23S rRNA.</text>
</comment>
<comment type="similarity">
    <text evidence="1">Belongs to the bacterial ribosomal protein bL9 family.</text>
</comment>
<sequence length="148" mass="15487">MQLILLEKVANLGNLGDKVNVKAGYGRNYLLPYGKATAATAANVAAFEERRAELEKLAADKKASAETRAAQLAELEVTITATAGDEGKLFGSIGTHDIADALTASGVEVAKSEVRLPNGTIRNVGEYDVAVHLHSDVEATVRVVVVAA</sequence>
<protein>
    <recommendedName>
        <fullName evidence="1">Large ribosomal subunit protein bL9</fullName>
    </recommendedName>
    <alternativeName>
        <fullName evidence="2">50S ribosomal protein L9</fullName>
    </alternativeName>
</protein>
<gene>
    <name evidence="1" type="primary">rplI</name>
    <name type="ordered locus">PSPPH_0579</name>
</gene>
<reference key="1">
    <citation type="journal article" date="2005" name="J. Bacteriol.">
        <title>Whole-genome sequence analysis of Pseudomonas syringae pv. phaseolicola 1448A reveals divergence among pathovars in genes involved in virulence and transposition.</title>
        <authorList>
            <person name="Joardar V."/>
            <person name="Lindeberg M."/>
            <person name="Jackson R.W."/>
            <person name="Selengut J."/>
            <person name="Dodson R."/>
            <person name="Brinkac L.M."/>
            <person name="Daugherty S.C."/>
            <person name="DeBoy R.T."/>
            <person name="Durkin A.S."/>
            <person name="Gwinn Giglio M."/>
            <person name="Madupu R."/>
            <person name="Nelson W.C."/>
            <person name="Rosovitz M.J."/>
            <person name="Sullivan S.A."/>
            <person name="Crabtree J."/>
            <person name="Creasy T."/>
            <person name="Davidsen T.M."/>
            <person name="Haft D.H."/>
            <person name="Zafar N."/>
            <person name="Zhou L."/>
            <person name="Halpin R."/>
            <person name="Holley T."/>
            <person name="Khouri H.M."/>
            <person name="Feldblyum T.V."/>
            <person name="White O."/>
            <person name="Fraser C.M."/>
            <person name="Chatterjee A.K."/>
            <person name="Cartinhour S."/>
            <person name="Schneider D."/>
            <person name="Mansfield J.W."/>
            <person name="Collmer A."/>
            <person name="Buell R."/>
        </authorList>
    </citation>
    <scope>NUCLEOTIDE SEQUENCE [LARGE SCALE GENOMIC DNA]</scope>
    <source>
        <strain>1448A / Race 6</strain>
    </source>
</reference>
<dbReference type="EMBL" id="CP000058">
    <property type="protein sequence ID" value="AAZ37261.1"/>
    <property type="molecule type" value="Genomic_DNA"/>
</dbReference>
<dbReference type="RefSeq" id="WP_002551831.1">
    <property type="nucleotide sequence ID" value="NC_005773.3"/>
</dbReference>
<dbReference type="SMR" id="Q48NZ0"/>
<dbReference type="GeneID" id="69857641"/>
<dbReference type="KEGG" id="psp:PSPPH_0579"/>
<dbReference type="eggNOG" id="COG0359">
    <property type="taxonomic scope" value="Bacteria"/>
</dbReference>
<dbReference type="HOGENOM" id="CLU_078938_4_1_6"/>
<dbReference type="Proteomes" id="UP000000551">
    <property type="component" value="Chromosome"/>
</dbReference>
<dbReference type="GO" id="GO:1990904">
    <property type="term" value="C:ribonucleoprotein complex"/>
    <property type="evidence" value="ECO:0007669"/>
    <property type="project" value="UniProtKB-KW"/>
</dbReference>
<dbReference type="GO" id="GO:0005840">
    <property type="term" value="C:ribosome"/>
    <property type="evidence" value="ECO:0007669"/>
    <property type="project" value="UniProtKB-KW"/>
</dbReference>
<dbReference type="GO" id="GO:0019843">
    <property type="term" value="F:rRNA binding"/>
    <property type="evidence" value="ECO:0007669"/>
    <property type="project" value="UniProtKB-UniRule"/>
</dbReference>
<dbReference type="GO" id="GO:0003735">
    <property type="term" value="F:structural constituent of ribosome"/>
    <property type="evidence" value="ECO:0007669"/>
    <property type="project" value="InterPro"/>
</dbReference>
<dbReference type="GO" id="GO:0006412">
    <property type="term" value="P:translation"/>
    <property type="evidence" value="ECO:0007669"/>
    <property type="project" value="UniProtKB-UniRule"/>
</dbReference>
<dbReference type="Gene3D" id="3.10.430.100">
    <property type="entry name" value="Ribosomal protein L9, C-terminal domain"/>
    <property type="match status" value="1"/>
</dbReference>
<dbReference type="Gene3D" id="3.40.5.10">
    <property type="entry name" value="Ribosomal protein L9, N-terminal domain"/>
    <property type="match status" value="1"/>
</dbReference>
<dbReference type="HAMAP" id="MF_00503">
    <property type="entry name" value="Ribosomal_bL9"/>
    <property type="match status" value="1"/>
</dbReference>
<dbReference type="InterPro" id="IPR000244">
    <property type="entry name" value="Ribosomal_bL9"/>
</dbReference>
<dbReference type="InterPro" id="IPR009027">
    <property type="entry name" value="Ribosomal_bL9/RNase_H1_N"/>
</dbReference>
<dbReference type="InterPro" id="IPR020594">
    <property type="entry name" value="Ribosomal_bL9_bac/chp"/>
</dbReference>
<dbReference type="InterPro" id="IPR020069">
    <property type="entry name" value="Ribosomal_bL9_C"/>
</dbReference>
<dbReference type="InterPro" id="IPR036791">
    <property type="entry name" value="Ribosomal_bL9_C_sf"/>
</dbReference>
<dbReference type="InterPro" id="IPR020070">
    <property type="entry name" value="Ribosomal_bL9_N"/>
</dbReference>
<dbReference type="InterPro" id="IPR036935">
    <property type="entry name" value="Ribosomal_bL9_N_sf"/>
</dbReference>
<dbReference type="NCBIfam" id="TIGR00158">
    <property type="entry name" value="L9"/>
    <property type="match status" value="1"/>
</dbReference>
<dbReference type="PANTHER" id="PTHR21368">
    <property type="entry name" value="50S RIBOSOMAL PROTEIN L9"/>
    <property type="match status" value="1"/>
</dbReference>
<dbReference type="Pfam" id="PF03948">
    <property type="entry name" value="Ribosomal_L9_C"/>
    <property type="match status" value="1"/>
</dbReference>
<dbReference type="Pfam" id="PF01281">
    <property type="entry name" value="Ribosomal_L9_N"/>
    <property type="match status" value="1"/>
</dbReference>
<dbReference type="SUPFAM" id="SSF55658">
    <property type="entry name" value="L9 N-domain-like"/>
    <property type="match status" value="1"/>
</dbReference>
<dbReference type="SUPFAM" id="SSF55653">
    <property type="entry name" value="Ribosomal protein L9 C-domain"/>
    <property type="match status" value="1"/>
</dbReference>
<dbReference type="PROSITE" id="PS00651">
    <property type="entry name" value="RIBOSOMAL_L9"/>
    <property type="match status" value="1"/>
</dbReference>
<feature type="chain" id="PRO_0000236573" description="Large ribosomal subunit protein bL9">
    <location>
        <begin position="1"/>
        <end position="148"/>
    </location>
</feature>